<dbReference type="EMBL" id="CH954178">
    <property type="protein sequence ID" value="EDV51846.1"/>
    <property type="status" value="ALT_INIT"/>
    <property type="molecule type" value="Genomic_DNA"/>
</dbReference>
<dbReference type="SMR" id="B3NHQ1"/>
<dbReference type="EnsemblMetazoa" id="FBtr0135785">
    <property type="protein sequence ID" value="FBpp0134277"/>
    <property type="gene ID" value="FBgn0107974"/>
</dbReference>
<dbReference type="EnsemblMetazoa" id="XM_001972784.3">
    <property type="protein sequence ID" value="XP_001972820.2"/>
    <property type="gene ID" value="LOC6546312"/>
</dbReference>
<dbReference type="GeneID" id="6546312"/>
<dbReference type="KEGG" id="der:6546312"/>
<dbReference type="CTD" id="40035"/>
<dbReference type="eggNOG" id="KOG2612">
    <property type="taxonomic scope" value="Eukaryota"/>
</dbReference>
<dbReference type="OrthoDB" id="21557at2759"/>
<dbReference type="Proteomes" id="UP000008711">
    <property type="component" value="Unassembled WGS sequence"/>
</dbReference>
<dbReference type="GO" id="GO:0005737">
    <property type="term" value="C:cytoplasm"/>
    <property type="evidence" value="ECO:0007669"/>
    <property type="project" value="UniProtKB-SubCell"/>
</dbReference>
<dbReference type="GO" id="GO:0071819">
    <property type="term" value="C:DUBm complex"/>
    <property type="evidence" value="ECO:0007669"/>
    <property type="project" value="UniProtKB-UniRule"/>
</dbReference>
<dbReference type="GO" id="GO:0005643">
    <property type="term" value="C:nuclear pore"/>
    <property type="evidence" value="ECO:0007669"/>
    <property type="project" value="UniProtKB-UniRule"/>
</dbReference>
<dbReference type="GO" id="GO:0005654">
    <property type="term" value="C:nucleoplasm"/>
    <property type="evidence" value="ECO:0007669"/>
    <property type="project" value="UniProtKB-SubCell"/>
</dbReference>
<dbReference type="GO" id="GO:0000124">
    <property type="term" value="C:SAGA complex"/>
    <property type="evidence" value="ECO:0000250"/>
    <property type="project" value="UniProtKB"/>
</dbReference>
<dbReference type="GO" id="GO:0003713">
    <property type="term" value="F:transcription coactivator activity"/>
    <property type="evidence" value="ECO:0007669"/>
    <property type="project" value="UniProtKB-UniRule"/>
</dbReference>
<dbReference type="GO" id="GO:0008270">
    <property type="term" value="F:zinc ion binding"/>
    <property type="evidence" value="ECO:0007669"/>
    <property type="project" value="UniProtKB-UniRule"/>
</dbReference>
<dbReference type="GO" id="GO:0006325">
    <property type="term" value="P:chromatin organization"/>
    <property type="evidence" value="ECO:0000250"/>
    <property type="project" value="UniProtKB"/>
</dbReference>
<dbReference type="GO" id="GO:0006406">
    <property type="term" value="P:mRNA export from nucleus"/>
    <property type="evidence" value="ECO:0007669"/>
    <property type="project" value="UniProtKB-UniRule"/>
</dbReference>
<dbReference type="GO" id="GO:0045893">
    <property type="term" value="P:positive regulation of DNA-templated transcription"/>
    <property type="evidence" value="ECO:0000250"/>
    <property type="project" value="UniProtKB"/>
</dbReference>
<dbReference type="GO" id="GO:0015031">
    <property type="term" value="P:protein transport"/>
    <property type="evidence" value="ECO:0007669"/>
    <property type="project" value="UniProtKB-KW"/>
</dbReference>
<dbReference type="GO" id="GO:0006357">
    <property type="term" value="P:regulation of transcription by RNA polymerase II"/>
    <property type="evidence" value="ECO:0007669"/>
    <property type="project" value="TreeGrafter"/>
</dbReference>
<dbReference type="FunFam" id="3.30.160.60:FF:000118">
    <property type="entry name" value="Ataxin-7-like protein 3"/>
    <property type="match status" value="1"/>
</dbReference>
<dbReference type="Gene3D" id="3.30.160.60">
    <property type="entry name" value="Classic Zinc Finger"/>
    <property type="match status" value="1"/>
</dbReference>
<dbReference type="HAMAP" id="MF_03047">
    <property type="entry name" value="Sgf11"/>
    <property type="match status" value="1"/>
</dbReference>
<dbReference type="InterPro" id="IPR013246">
    <property type="entry name" value="SAGA_su_Sgf11"/>
</dbReference>
<dbReference type="InterPro" id="IPR051078">
    <property type="entry name" value="SGF11"/>
</dbReference>
<dbReference type="PANTHER" id="PTHR46367">
    <property type="entry name" value="ATAXIN-7-LIKE PROTEIN 3"/>
    <property type="match status" value="1"/>
</dbReference>
<dbReference type="PANTHER" id="PTHR46367:SF1">
    <property type="entry name" value="ATAXIN-7-LIKE PROTEIN 3"/>
    <property type="match status" value="1"/>
</dbReference>
<dbReference type="Pfam" id="PF08209">
    <property type="entry name" value="Sgf11"/>
    <property type="match status" value="1"/>
</dbReference>
<gene>
    <name evidence="2" type="primary">Sgf11</name>
    <name type="ORF">GG15731</name>
</gene>
<protein>
    <recommendedName>
        <fullName evidence="2">SAGA-associated factor 11 homolog</fullName>
    </recommendedName>
</protein>
<feature type="chain" id="PRO_0000367522" description="SAGA-associated factor 11 homolog">
    <location>
        <begin position="1"/>
        <end position="196"/>
    </location>
</feature>
<feature type="zinc finger region" description="SGF11-type" evidence="2">
    <location>
        <begin position="106"/>
        <end position="127"/>
    </location>
</feature>
<feature type="region of interest" description="Disordered" evidence="3">
    <location>
        <begin position="1"/>
        <end position="22"/>
    </location>
</feature>
<feature type="region of interest" description="Disordered" evidence="3">
    <location>
        <begin position="144"/>
        <end position="196"/>
    </location>
</feature>
<feature type="compositionally biased region" description="Low complexity" evidence="3">
    <location>
        <begin position="180"/>
        <end position="196"/>
    </location>
</feature>
<feature type="modified residue" description="Phosphoserine" evidence="1">
    <location>
        <position position="172"/>
    </location>
</feature>
<comment type="function">
    <text evidence="2">Component of the transcription regulatory histone acetylation (HAT) complex SAGA, a multiprotein complex that activates transcription by remodeling chromatin and mediating histone acetylation and deubiquitination. Within the SAGA complex, participates in a subcomplex that specifically deubiquitinates histone H2B. The SAGA complex is recruited to specific gene promoters by activators, where it is required for transcription. Required for nuclear receptor-mediated transactivation. Binds independently on SAGA to promoters in an RNA-dependent manner. Binds to mRNA and is essential for total mRNA export from the nucleus. Required to counteract heterochromatin silencing. Controls the development of neuronal connectivity in visual system by being required for accurate axon targeting in the optic lobe. Required for expression of ecdysone-induced genes such as br/broad.</text>
</comment>
<comment type="subunit">
    <text evidence="2">Component of some SAGA transcription coactivator-HAT complexes, at least composed of Ada2b, not/nonstop, Pcaf/Gcn5, Sgf11 and Spt3. Within the SAGA complex, Sgf11, e(y)2, and not/nonstop form an additional subcomplex of SAGA called the DUB module (deubiquitination module). Interacts directly with not/nonstop. Interacts with the AMEX complex component xmas-2. Interacts with Cbp80; important for promoter recruitment of Sgf11 that is not associated with the DUB module.</text>
</comment>
<comment type="subcellular location">
    <subcellularLocation>
        <location evidence="2">Nucleus</location>
        <location evidence="2">Nucleoplasm</location>
    </subcellularLocation>
    <subcellularLocation>
        <location evidence="2">Cytoplasm</location>
    </subcellularLocation>
    <text evidence="2">Localizes to nuclear periphery, in contact with the nuclear pore complex (NPC).</text>
</comment>
<comment type="domain">
    <text evidence="2">The long N-terminal helix forms part of the 'assembly lobe' of the SAGA deubiquitination module.</text>
</comment>
<comment type="domain">
    <text evidence="2">The C-terminal SGF11-type zinc-finger domain together with the C-terminal catalytic domain of not/nonstop forms the 'catalytic lobe' of the SAGA deubiquitination module.</text>
</comment>
<comment type="similarity">
    <text evidence="2">Belongs to the SGF11 family.</text>
</comment>
<comment type="sequence caution" evidence="4">
    <conflict type="erroneous initiation">
        <sequence resource="EMBL-CDS" id="EDV51846"/>
    </conflict>
</comment>
<proteinExistence type="inferred from homology"/>
<sequence length="196" mass="21292">MSAANMPTTTGAQGSGNQVPTTSTTIVNHFRELIKDPKNLDEASNYLFQTLLDDAVVGIFNETHHLRKSGNLAALDGVPEDSTYRMCEMPNLDIFGISTAKKPMDCTCPNCDRLVAAARFAPHLEKCMGMGRISSRIASRRLATKEGATSAHLHSAGNTGGTDDEDDVDWSSDKRRKKSNQNSRNNGSKKNNGKSF</sequence>
<accession>B3NHQ1</accession>
<evidence type="ECO:0000250" key="1"/>
<evidence type="ECO:0000255" key="2">
    <source>
        <dbReference type="HAMAP-Rule" id="MF_03047"/>
    </source>
</evidence>
<evidence type="ECO:0000256" key="3">
    <source>
        <dbReference type="SAM" id="MobiDB-lite"/>
    </source>
</evidence>
<evidence type="ECO:0000305" key="4"/>
<keyword id="KW-0010">Activator</keyword>
<keyword id="KW-0156">Chromatin regulator</keyword>
<keyword id="KW-0963">Cytoplasm</keyword>
<keyword id="KW-0479">Metal-binding</keyword>
<keyword id="KW-0509">mRNA transport</keyword>
<keyword id="KW-0539">Nucleus</keyword>
<keyword id="KW-0597">Phosphoprotein</keyword>
<keyword id="KW-0653">Protein transport</keyword>
<keyword id="KW-0804">Transcription</keyword>
<keyword id="KW-0805">Transcription regulation</keyword>
<keyword id="KW-0811">Translocation</keyword>
<keyword id="KW-0813">Transport</keyword>
<keyword id="KW-0862">Zinc</keyword>
<keyword id="KW-0863">Zinc-finger</keyword>
<organism>
    <name type="scientific">Drosophila erecta</name>
    <name type="common">Fruit fly</name>
    <dbReference type="NCBI Taxonomy" id="7220"/>
    <lineage>
        <taxon>Eukaryota</taxon>
        <taxon>Metazoa</taxon>
        <taxon>Ecdysozoa</taxon>
        <taxon>Arthropoda</taxon>
        <taxon>Hexapoda</taxon>
        <taxon>Insecta</taxon>
        <taxon>Pterygota</taxon>
        <taxon>Neoptera</taxon>
        <taxon>Endopterygota</taxon>
        <taxon>Diptera</taxon>
        <taxon>Brachycera</taxon>
        <taxon>Muscomorpha</taxon>
        <taxon>Ephydroidea</taxon>
        <taxon>Drosophilidae</taxon>
        <taxon>Drosophila</taxon>
        <taxon>Sophophora</taxon>
    </lineage>
</organism>
<reference key="1">
    <citation type="journal article" date="2007" name="Nature">
        <title>Evolution of genes and genomes on the Drosophila phylogeny.</title>
        <authorList>
            <consortium name="Drosophila 12 genomes consortium"/>
        </authorList>
    </citation>
    <scope>NUCLEOTIDE SEQUENCE [LARGE SCALE GENOMIC DNA]</scope>
    <source>
        <strain>Tucson 14021-0224.01</strain>
    </source>
</reference>
<name>SGF11_DROER</name>